<name>URE2_PROM9</name>
<protein>
    <recommendedName>
        <fullName evidence="1">Urease subunit beta</fullName>
        <ecNumber evidence="1">3.5.1.5</ecNumber>
    </recommendedName>
    <alternativeName>
        <fullName evidence="1">Urea amidohydrolase subunit beta</fullName>
    </alternativeName>
</protein>
<evidence type="ECO:0000255" key="1">
    <source>
        <dbReference type="HAMAP-Rule" id="MF_01954"/>
    </source>
</evidence>
<feature type="chain" id="PRO_0000234255" description="Urease subunit beta">
    <location>
        <begin position="1"/>
        <end position="106"/>
    </location>
</feature>
<accession>Q31B50</accession>
<keyword id="KW-0963">Cytoplasm</keyword>
<keyword id="KW-0378">Hydrolase</keyword>
<sequence>MSNLIPGEIIPEQGEIELNLGKEVKTVTVSNSGDRPVQVGSHYHFFEANKALIFDREITLGMRLDIPAGTAIRFEPGDTTDVKLVSYSGLKNAYGFNSLVNGSLDT</sequence>
<comment type="catalytic activity">
    <reaction evidence="1">
        <text>urea + 2 H2O + H(+) = hydrogencarbonate + 2 NH4(+)</text>
        <dbReference type="Rhea" id="RHEA:20557"/>
        <dbReference type="ChEBI" id="CHEBI:15377"/>
        <dbReference type="ChEBI" id="CHEBI:15378"/>
        <dbReference type="ChEBI" id="CHEBI:16199"/>
        <dbReference type="ChEBI" id="CHEBI:17544"/>
        <dbReference type="ChEBI" id="CHEBI:28938"/>
        <dbReference type="EC" id="3.5.1.5"/>
    </reaction>
</comment>
<comment type="pathway">
    <text evidence="1">Nitrogen metabolism; urea degradation; CO(2) and NH(3) from urea (urease route): step 1/1.</text>
</comment>
<comment type="subunit">
    <text evidence="1">Heterotrimer of UreA (gamma), UreB (beta) and UreC (alpha) subunits. Three heterotrimers associate to form the active enzyme.</text>
</comment>
<comment type="subcellular location">
    <subcellularLocation>
        <location evidence="1">Cytoplasm</location>
    </subcellularLocation>
</comment>
<comment type="similarity">
    <text evidence="1">Belongs to the urease beta subunit family.</text>
</comment>
<proteinExistence type="inferred from homology"/>
<organism>
    <name type="scientific">Prochlorococcus marinus (strain MIT 9312)</name>
    <dbReference type="NCBI Taxonomy" id="74546"/>
    <lineage>
        <taxon>Bacteria</taxon>
        <taxon>Bacillati</taxon>
        <taxon>Cyanobacteriota</taxon>
        <taxon>Cyanophyceae</taxon>
        <taxon>Synechococcales</taxon>
        <taxon>Prochlorococcaceae</taxon>
        <taxon>Prochlorococcus</taxon>
    </lineage>
</organism>
<dbReference type="EC" id="3.5.1.5" evidence="1"/>
<dbReference type="EMBL" id="CP000111">
    <property type="protein sequence ID" value="ABB49895.1"/>
    <property type="molecule type" value="Genomic_DNA"/>
</dbReference>
<dbReference type="RefSeq" id="WP_011376390.1">
    <property type="nucleotide sequence ID" value="NC_007577.1"/>
</dbReference>
<dbReference type="SMR" id="Q31B50"/>
<dbReference type="STRING" id="74546.PMT9312_0835"/>
<dbReference type="KEGG" id="pmi:PMT9312_0835"/>
<dbReference type="eggNOG" id="COG0832">
    <property type="taxonomic scope" value="Bacteria"/>
</dbReference>
<dbReference type="HOGENOM" id="CLU_129707_1_1_3"/>
<dbReference type="OrthoDB" id="9797217at2"/>
<dbReference type="UniPathway" id="UPA00258">
    <property type="reaction ID" value="UER00370"/>
</dbReference>
<dbReference type="Proteomes" id="UP000002715">
    <property type="component" value="Chromosome"/>
</dbReference>
<dbReference type="GO" id="GO:0035550">
    <property type="term" value="C:urease complex"/>
    <property type="evidence" value="ECO:0007669"/>
    <property type="project" value="InterPro"/>
</dbReference>
<dbReference type="GO" id="GO:0009039">
    <property type="term" value="F:urease activity"/>
    <property type="evidence" value="ECO:0007669"/>
    <property type="project" value="UniProtKB-UniRule"/>
</dbReference>
<dbReference type="GO" id="GO:0043419">
    <property type="term" value="P:urea catabolic process"/>
    <property type="evidence" value="ECO:0007669"/>
    <property type="project" value="UniProtKB-UniRule"/>
</dbReference>
<dbReference type="CDD" id="cd00407">
    <property type="entry name" value="Urease_beta"/>
    <property type="match status" value="1"/>
</dbReference>
<dbReference type="FunFam" id="2.10.150.10:FF:000001">
    <property type="entry name" value="Urease subunit beta"/>
    <property type="match status" value="1"/>
</dbReference>
<dbReference type="Gene3D" id="2.10.150.10">
    <property type="entry name" value="Urease, beta subunit"/>
    <property type="match status" value="1"/>
</dbReference>
<dbReference type="HAMAP" id="MF_01954">
    <property type="entry name" value="Urease_beta"/>
    <property type="match status" value="1"/>
</dbReference>
<dbReference type="InterPro" id="IPR002019">
    <property type="entry name" value="Urease_beta-like"/>
</dbReference>
<dbReference type="InterPro" id="IPR036461">
    <property type="entry name" value="Urease_betasu_sf"/>
</dbReference>
<dbReference type="InterPro" id="IPR050069">
    <property type="entry name" value="Urease_subunit"/>
</dbReference>
<dbReference type="NCBIfam" id="NF009682">
    <property type="entry name" value="PRK13203.1"/>
    <property type="match status" value="1"/>
</dbReference>
<dbReference type="NCBIfam" id="TIGR00192">
    <property type="entry name" value="urease_beta"/>
    <property type="match status" value="1"/>
</dbReference>
<dbReference type="PANTHER" id="PTHR33569">
    <property type="entry name" value="UREASE"/>
    <property type="match status" value="1"/>
</dbReference>
<dbReference type="PANTHER" id="PTHR33569:SF1">
    <property type="entry name" value="UREASE"/>
    <property type="match status" value="1"/>
</dbReference>
<dbReference type="Pfam" id="PF00699">
    <property type="entry name" value="Urease_beta"/>
    <property type="match status" value="1"/>
</dbReference>
<dbReference type="SUPFAM" id="SSF51278">
    <property type="entry name" value="Urease, beta-subunit"/>
    <property type="match status" value="1"/>
</dbReference>
<gene>
    <name evidence="1" type="primary">ureB</name>
    <name type="ordered locus">PMT9312_0835</name>
</gene>
<reference key="1">
    <citation type="journal article" date="2006" name="Science">
        <title>Genomic islands and the ecology and evolution of Prochlorococcus.</title>
        <authorList>
            <person name="Coleman M.L."/>
            <person name="Sullivan M.B."/>
            <person name="Martiny A.C."/>
            <person name="Steglich C."/>
            <person name="Barry K."/>
            <person name="Delong E.F."/>
            <person name="Chisholm S.W."/>
        </authorList>
    </citation>
    <scope>NUCLEOTIDE SEQUENCE [LARGE SCALE GENOMIC DNA]</scope>
    <source>
        <strain>MIT 9312</strain>
    </source>
</reference>